<comment type="subcellular location">
    <subcellularLocation>
        <location evidence="1">Spore core</location>
    </subcellularLocation>
</comment>
<comment type="induction">
    <text evidence="1">Expressed only in the forespore compartment of sporulating cells.</text>
</comment>
<comment type="similarity">
    <text evidence="1">Belongs to the SspK family.</text>
</comment>
<reference key="1">
    <citation type="submission" date="2008-10" db="EMBL/GenBank/DDBJ databases">
        <title>Genome sequence of Bacillus cereus AH187.</title>
        <authorList>
            <person name="Dodson R.J."/>
            <person name="Durkin A.S."/>
            <person name="Rosovitz M.J."/>
            <person name="Rasko D.A."/>
            <person name="Kolsto A.B."/>
            <person name="Okstad O.A."/>
            <person name="Ravel J."/>
            <person name="Sutton G."/>
        </authorList>
    </citation>
    <scope>NUCLEOTIDE SEQUENCE [LARGE SCALE GENOMIC DNA]</scope>
    <source>
        <strain>AH187</strain>
    </source>
</reference>
<organism>
    <name type="scientific">Bacillus cereus (strain AH187)</name>
    <dbReference type="NCBI Taxonomy" id="405534"/>
    <lineage>
        <taxon>Bacteria</taxon>
        <taxon>Bacillati</taxon>
        <taxon>Bacillota</taxon>
        <taxon>Bacilli</taxon>
        <taxon>Bacillales</taxon>
        <taxon>Bacillaceae</taxon>
        <taxon>Bacillus</taxon>
        <taxon>Bacillus cereus group</taxon>
    </lineage>
</organism>
<evidence type="ECO:0000255" key="1">
    <source>
        <dbReference type="HAMAP-Rule" id="MF_01504"/>
    </source>
</evidence>
<evidence type="ECO:0000256" key="2">
    <source>
        <dbReference type="SAM" id="MobiDB-lite"/>
    </source>
</evidence>
<gene>
    <name evidence="1" type="primary">sspK</name>
    <name type="ordered locus">BCAH187_A0575</name>
</gene>
<keyword id="KW-0749">Sporulation</keyword>
<protein>
    <recommendedName>
        <fullName evidence="1">Small, acid-soluble spore protein K</fullName>
        <shortName evidence="1">SASP K</shortName>
    </recommendedName>
</protein>
<accession>B7HU54</accession>
<name>SSPK_BACC7</name>
<dbReference type="EMBL" id="CP001177">
    <property type="protein sequence ID" value="ACJ79128.1"/>
    <property type="molecule type" value="Genomic_DNA"/>
</dbReference>
<dbReference type="KEGG" id="bcr:BCAH187_A0575"/>
<dbReference type="HOGENOM" id="CLU_3076423_0_0_9"/>
<dbReference type="Proteomes" id="UP000002214">
    <property type="component" value="Chromosome"/>
</dbReference>
<dbReference type="GO" id="GO:0042601">
    <property type="term" value="C:endospore-forming forespore"/>
    <property type="evidence" value="ECO:0007669"/>
    <property type="project" value="InterPro"/>
</dbReference>
<dbReference type="GO" id="GO:0030436">
    <property type="term" value="P:asexual sporulation"/>
    <property type="evidence" value="ECO:0007669"/>
    <property type="project" value="UniProtKB-UniRule"/>
</dbReference>
<dbReference type="GO" id="GO:0030435">
    <property type="term" value="P:sporulation resulting in formation of a cellular spore"/>
    <property type="evidence" value="ECO:0007669"/>
    <property type="project" value="UniProtKB-KW"/>
</dbReference>
<dbReference type="HAMAP" id="MF_01504">
    <property type="entry name" value="SspK"/>
    <property type="match status" value="1"/>
</dbReference>
<dbReference type="InterPro" id="IPR012611">
    <property type="entry name" value="SASP_SspK"/>
</dbReference>
<dbReference type="NCBIfam" id="NF002843">
    <property type="entry name" value="PRK03081.1"/>
    <property type="match status" value="1"/>
</dbReference>
<dbReference type="NCBIfam" id="TIGR03091">
    <property type="entry name" value="SASP_sspK"/>
    <property type="match status" value="1"/>
</dbReference>
<dbReference type="Pfam" id="PF08176">
    <property type="entry name" value="SspK"/>
    <property type="match status" value="1"/>
</dbReference>
<feature type="chain" id="PRO_1000196544" description="Small, acid-soluble spore protein K">
    <location>
        <begin position="1"/>
        <end position="52"/>
    </location>
</feature>
<feature type="region of interest" description="Disordered" evidence="2">
    <location>
        <begin position="1"/>
        <end position="52"/>
    </location>
</feature>
<proteinExistence type="inferred from homology"/>
<sequence length="52" mass="5946">MGKQAEFWSESKNNSKIDGQPKAKSRFASKRPNGTINTHPQERMRAANQQEE</sequence>